<name>RL33_OPITP</name>
<comment type="similarity">
    <text evidence="1">Belongs to the bacterial ribosomal protein bL33 family.</text>
</comment>
<evidence type="ECO:0000255" key="1">
    <source>
        <dbReference type="HAMAP-Rule" id="MF_00294"/>
    </source>
</evidence>
<evidence type="ECO:0000305" key="2"/>
<sequence>MQELVTLECTEARKEGKPVSRYLTTRNKKTVTERIEKKKYNPHLKRHTLHKEIK</sequence>
<accession>B1ZQW3</accession>
<gene>
    <name evidence="1" type="primary">rpmG</name>
    <name type="ordered locus">Oter_4590</name>
</gene>
<feature type="chain" id="PRO_0000356600" description="Large ribosomal subunit protein bL33">
    <location>
        <begin position="1"/>
        <end position="54"/>
    </location>
</feature>
<keyword id="KW-1185">Reference proteome</keyword>
<keyword id="KW-0687">Ribonucleoprotein</keyword>
<keyword id="KW-0689">Ribosomal protein</keyword>
<proteinExistence type="inferred from homology"/>
<organism>
    <name type="scientific">Opitutus terrae (strain DSM 11246 / JCM 15787 / PB90-1)</name>
    <dbReference type="NCBI Taxonomy" id="452637"/>
    <lineage>
        <taxon>Bacteria</taxon>
        <taxon>Pseudomonadati</taxon>
        <taxon>Verrucomicrobiota</taxon>
        <taxon>Opitutia</taxon>
        <taxon>Opitutales</taxon>
        <taxon>Opitutaceae</taxon>
        <taxon>Opitutus</taxon>
    </lineage>
</organism>
<protein>
    <recommendedName>
        <fullName evidence="1">Large ribosomal subunit protein bL33</fullName>
    </recommendedName>
    <alternativeName>
        <fullName evidence="2">50S ribosomal protein L33</fullName>
    </alternativeName>
</protein>
<reference key="1">
    <citation type="journal article" date="2011" name="J. Bacteriol.">
        <title>Genome sequence of the verrucomicrobium Opitutus terrae PB90-1, an abundant inhabitant of rice paddy soil ecosystems.</title>
        <authorList>
            <person name="van Passel M.W."/>
            <person name="Kant R."/>
            <person name="Palva A."/>
            <person name="Copeland A."/>
            <person name="Lucas S."/>
            <person name="Lapidus A."/>
            <person name="Glavina del Rio T."/>
            <person name="Pitluck S."/>
            <person name="Goltsman E."/>
            <person name="Clum A."/>
            <person name="Sun H."/>
            <person name="Schmutz J."/>
            <person name="Larimer F.W."/>
            <person name="Land M.L."/>
            <person name="Hauser L."/>
            <person name="Kyrpides N."/>
            <person name="Mikhailova N."/>
            <person name="Richardson P.P."/>
            <person name="Janssen P.H."/>
            <person name="de Vos W.M."/>
            <person name="Smidt H."/>
        </authorList>
    </citation>
    <scope>NUCLEOTIDE SEQUENCE [LARGE SCALE GENOMIC DNA]</scope>
    <source>
        <strain>DSM 11246 / JCM 15787 / PB90-1</strain>
    </source>
</reference>
<dbReference type="EMBL" id="CP001032">
    <property type="protein sequence ID" value="ACB77861.1"/>
    <property type="molecule type" value="Genomic_DNA"/>
</dbReference>
<dbReference type="RefSeq" id="WP_012377375.1">
    <property type="nucleotide sequence ID" value="NC_010571.1"/>
</dbReference>
<dbReference type="SMR" id="B1ZQW3"/>
<dbReference type="STRING" id="452637.Oter_4590"/>
<dbReference type="KEGG" id="ote:Oter_4590"/>
<dbReference type="eggNOG" id="COG0267">
    <property type="taxonomic scope" value="Bacteria"/>
</dbReference>
<dbReference type="HOGENOM" id="CLU_190949_3_0_0"/>
<dbReference type="OrthoDB" id="197660at2"/>
<dbReference type="Proteomes" id="UP000007013">
    <property type="component" value="Chromosome"/>
</dbReference>
<dbReference type="GO" id="GO:0005737">
    <property type="term" value="C:cytoplasm"/>
    <property type="evidence" value="ECO:0007669"/>
    <property type="project" value="UniProtKB-ARBA"/>
</dbReference>
<dbReference type="GO" id="GO:1990904">
    <property type="term" value="C:ribonucleoprotein complex"/>
    <property type="evidence" value="ECO:0007669"/>
    <property type="project" value="UniProtKB-KW"/>
</dbReference>
<dbReference type="GO" id="GO:0005840">
    <property type="term" value="C:ribosome"/>
    <property type="evidence" value="ECO:0007669"/>
    <property type="project" value="UniProtKB-KW"/>
</dbReference>
<dbReference type="GO" id="GO:0003735">
    <property type="term" value="F:structural constituent of ribosome"/>
    <property type="evidence" value="ECO:0007669"/>
    <property type="project" value="InterPro"/>
</dbReference>
<dbReference type="GO" id="GO:0006412">
    <property type="term" value="P:translation"/>
    <property type="evidence" value="ECO:0007669"/>
    <property type="project" value="UniProtKB-UniRule"/>
</dbReference>
<dbReference type="Gene3D" id="2.20.28.120">
    <property type="entry name" value="Ribosomal protein L33"/>
    <property type="match status" value="1"/>
</dbReference>
<dbReference type="HAMAP" id="MF_00294">
    <property type="entry name" value="Ribosomal_bL33"/>
    <property type="match status" value="1"/>
</dbReference>
<dbReference type="InterPro" id="IPR001705">
    <property type="entry name" value="Ribosomal_bL33"/>
</dbReference>
<dbReference type="InterPro" id="IPR038584">
    <property type="entry name" value="Ribosomal_bL33_sf"/>
</dbReference>
<dbReference type="InterPro" id="IPR011332">
    <property type="entry name" value="Ribosomal_zn-bd"/>
</dbReference>
<dbReference type="NCBIfam" id="NF001764">
    <property type="entry name" value="PRK00504.1"/>
    <property type="match status" value="1"/>
</dbReference>
<dbReference type="NCBIfam" id="NF001860">
    <property type="entry name" value="PRK00595.1"/>
    <property type="match status" value="1"/>
</dbReference>
<dbReference type="NCBIfam" id="TIGR01023">
    <property type="entry name" value="rpmG_bact"/>
    <property type="match status" value="1"/>
</dbReference>
<dbReference type="PANTHER" id="PTHR43168">
    <property type="entry name" value="50S RIBOSOMAL PROTEIN L33, CHLOROPLASTIC"/>
    <property type="match status" value="1"/>
</dbReference>
<dbReference type="PANTHER" id="PTHR43168:SF2">
    <property type="entry name" value="LARGE RIBOSOMAL SUBUNIT PROTEIN BL33C"/>
    <property type="match status" value="1"/>
</dbReference>
<dbReference type="Pfam" id="PF00471">
    <property type="entry name" value="Ribosomal_L33"/>
    <property type="match status" value="1"/>
</dbReference>
<dbReference type="SUPFAM" id="SSF57829">
    <property type="entry name" value="Zn-binding ribosomal proteins"/>
    <property type="match status" value="1"/>
</dbReference>